<organism evidence="18">
    <name type="scientific">Arabidopsis thaliana</name>
    <name type="common">Mouse-ear cress</name>
    <dbReference type="NCBI Taxonomy" id="3702"/>
    <lineage>
        <taxon>Eukaryota</taxon>
        <taxon>Viridiplantae</taxon>
        <taxon>Streptophyta</taxon>
        <taxon>Embryophyta</taxon>
        <taxon>Tracheophyta</taxon>
        <taxon>Spermatophyta</taxon>
        <taxon>Magnoliopsida</taxon>
        <taxon>eudicotyledons</taxon>
        <taxon>Gunneridae</taxon>
        <taxon>Pentapetalae</taxon>
        <taxon>rosids</taxon>
        <taxon>malvids</taxon>
        <taxon>Brassicales</taxon>
        <taxon>Brassicaceae</taxon>
        <taxon>Camelineae</taxon>
        <taxon>Arabidopsis</taxon>
    </lineage>
</organism>
<protein>
    <recommendedName>
        <fullName>Chlorophyll a-b binding protein 3, chloroplastic</fullName>
    </recommendedName>
    <alternativeName>
        <fullName evidence="19">Light-harvesting chlorophyll B-binding protein 3</fullName>
        <shortName evidence="15">LHCB3*1</shortName>
        <shortName evidence="15">Lhcb3</shortName>
    </alternativeName>
</protein>
<keyword id="KW-0002">3D-structure</keyword>
<keyword id="KW-0025">Alternative splicing</keyword>
<keyword id="KW-0148">Chlorophyll</keyword>
<keyword id="KW-0150">Chloroplast</keyword>
<keyword id="KW-0157">Chromophore</keyword>
<keyword id="KW-0460">Magnesium</keyword>
<keyword id="KW-0472">Membrane</keyword>
<keyword id="KW-0479">Metal-binding</keyword>
<keyword id="KW-0602">Photosynthesis</keyword>
<keyword id="KW-0603">Photosystem I</keyword>
<keyword id="KW-0604">Photosystem II</keyword>
<keyword id="KW-0934">Plastid</keyword>
<keyword id="KW-1185">Reference proteome</keyword>
<keyword id="KW-0793">Thylakoid</keyword>
<keyword id="KW-0809">Transit peptide</keyword>
<keyword id="KW-0812">Transmembrane</keyword>
<keyword id="KW-1133">Transmembrane helix</keyword>
<name>CB3_ARATH</name>
<proteinExistence type="evidence at protein level"/>
<accession>Q9S7M0</accession>
<accession>C0Z239</accession>
<accession>Q42016</accession>
<gene>
    <name evidence="15" type="primary">LHCB3</name>
    <name evidence="17" type="ordered locus">At5g54270</name>
    <name evidence="20" type="ORF">MDK4.9</name>
</gene>
<feature type="transit peptide" description="Chloroplast" evidence="4">
    <location>
        <begin position="1"/>
        <end position="22"/>
    </location>
</feature>
<feature type="chain" id="PRO_0000436333" description="Chlorophyll a-b binding protein 3, chloroplastic">
    <location>
        <begin position="23"/>
        <end position="265"/>
    </location>
</feature>
<feature type="transmembrane region" description="Helical" evidence="4">
    <location>
        <begin position="150"/>
        <end position="170"/>
    </location>
</feature>
<feature type="transmembrane region" description="Helical" evidence="4">
    <location>
        <begin position="219"/>
        <end position="239"/>
    </location>
</feature>
<feature type="binding site" description="axial binding residue" evidence="3">
    <location>
        <position position="55"/>
    </location>
    <ligand>
        <name>chlorophyll b</name>
        <dbReference type="ChEBI" id="CHEBI:61721"/>
        <label>1</label>
    </ligand>
    <ligandPart>
        <name>Mg</name>
        <dbReference type="ChEBI" id="CHEBI:25107"/>
    </ligandPart>
</feature>
<feature type="binding site" evidence="1">
    <location>
        <position position="77"/>
    </location>
    <ligand>
        <name>chlorophyll a</name>
        <dbReference type="ChEBI" id="CHEBI:58416"/>
        <label>1</label>
    </ligand>
</feature>
<feature type="binding site" evidence="1">
    <location>
        <position position="83"/>
    </location>
    <ligand>
        <name>chlorophyll a</name>
        <dbReference type="ChEBI" id="CHEBI:58416"/>
        <label>1</label>
    </ligand>
</feature>
<feature type="binding site" description="axial binding residue" evidence="3">
    <location>
        <position position="96"/>
    </location>
    <ligand>
        <name>chlorophyll a</name>
        <dbReference type="ChEBI" id="CHEBI:58416"/>
        <label>1</label>
    </ligand>
    <ligandPart>
        <name>Mg</name>
        <dbReference type="ChEBI" id="CHEBI:25107"/>
    </ligandPart>
</feature>
<feature type="binding site" description="axial binding residue" evidence="3">
    <location>
        <position position="99"/>
    </location>
    <ligand>
        <name>chlorophyll a</name>
        <dbReference type="ChEBI" id="CHEBI:58416"/>
        <label>2</label>
    </ligand>
    <ligandPart>
        <name>Mg</name>
        <dbReference type="ChEBI" id="CHEBI:25107"/>
    </ligandPart>
</feature>
<feature type="binding site" evidence="1">
    <location>
        <position position="101"/>
    </location>
    <ligand>
        <name>chlorophyll b</name>
        <dbReference type="ChEBI" id="CHEBI:61721"/>
        <label>2</label>
    </ligand>
</feature>
<feature type="binding site" evidence="1">
    <location>
        <position position="135"/>
    </location>
    <ligand>
        <name>chlorophyll a</name>
        <dbReference type="ChEBI" id="CHEBI:58416"/>
        <label>3</label>
    </ligand>
</feature>
<feature type="binding site" evidence="1">
    <location>
        <position position="145"/>
    </location>
    <ligand>
        <name>chlorophyll a</name>
        <dbReference type="ChEBI" id="CHEBI:58416"/>
        <label>3</label>
    </ligand>
</feature>
<feature type="binding site" description="axial binding residue" evidence="3">
    <location>
        <position position="151"/>
    </location>
    <ligand>
        <name>chlorophyll b</name>
        <dbReference type="ChEBI" id="CHEBI:61721"/>
        <label>2</label>
    </ligand>
    <ligandPart>
        <name>Mg</name>
        <dbReference type="ChEBI" id="CHEBI:25107"/>
    </ligandPart>
</feature>
<feature type="binding site" evidence="1">
    <location>
        <position position="155"/>
    </location>
    <ligand>
        <name>chlorophyll b</name>
        <dbReference type="ChEBI" id="CHEBI:61721"/>
        <label>3</label>
    </ligand>
</feature>
<feature type="binding site" evidence="1">
    <location>
        <position position="163"/>
    </location>
    <ligand>
        <name>chlorophyll b</name>
        <dbReference type="ChEBI" id="CHEBI:61721"/>
        <label>4</label>
    </ligand>
</feature>
<feature type="binding site" evidence="2">
    <location>
        <position position="163"/>
    </location>
    <ligand>
        <name>chlorophyll b</name>
        <dbReference type="ChEBI" id="CHEBI:61721"/>
        <label>5</label>
    </ligand>
</feature>
<feature type="binding site" description="axial binding residue" evidence="3">
    <location>
        <position position="171"/>
    </location>
    <ligand>
        <name>chlorophyll b</name>
        <dbReference type="ChEBI" id="CHEBI:61721"/>
        <label>3</label>
    </ligand>
    <ligandPart>
        <name>Mg</name>
        <dbReference type="ChEBI" id="CHEBI:25107"/>
    </ligandPart>
</feature>
<feature type="binding site" evidence="1">
    <location>
        <position position="174"/>
    </location>
    <ligand>
        <name>chlorophyll b</name>
        <dbReference type="ChEBI" id="CHEBI:61721"/>
        <label>4</label>
    </ligand>
</feature>
<feature type="binding site" evidence="1">
    <location>
        <position position="212"/>
    </location>
    <ligand>
        <name>chlorophyll a</name>
        <dbReference type="ChEBI" id="CHEBI:58416"/>
        <label>5</label>
    </ligand>
</feature>
<feature type="binding site" description="axial binding residue" evidence="3">
    <location>
        <position position="213"/>
    </location>
    <ligand>
        <name>chlorophyll a</name>
        <dbReference type="ChEBI" id="CHEBI:58416"/>
        <label>3</label>
    </ligand>
    <ligandPart>
        <name>Mg</name>
        <dbReference type="ChEBI" id="CHEBI:25107"/>
    </ligandPart>
</feature>
<feature type="binding site" description="axial binding residue" evidence="3">
    <location>
        <position position="216"/>
    </location>
    <ligand>
        <name>chlorophyll a</name>
        <dbReference type="ChEBI" id="CHEBI:58416"/>
        <label>4</label>
    </ligand>
    <ligandPart>
        <name>Mg</name>
        <dbReference type="ChEBI" id="CHEBI:25107"/>
    </ligandPart>
</feature>
<feature type="binding site" evidence="1">
    <location>
        <position position="218"/>
    </location>
    <ligand>
        <name>chlorophyll a</name>
        <dbReference type="ChEBI" id="CHEBI:58416"/>
        <label>1</label>
    </ligand>
</feature>
<feature type="binding site" description="axial binding residue" evidence="3">
    <location>
        <position position="230"/>
    </location>
    <ligand>
        <name>chlorophyll a</name>
        <dbReference type="ChEBI" id="CHEBI:58416"/>
        <label>5</label>
    </ligand>
    <ligandPart>
        <name>Mg</name>
        <dbReference type="ChEBI" id="CHEBI:25107"/>
    </ligandPart>
</feature>
<feature type="binding site" description="axial binding residue" evidence="3">
    <location>
        <position position="245"/>
    </location>
    <ligand>
        <name>chlorophyll a</name>
        <dbReference type="ChEBI" id="CHEBI:58416"/>
        <label>6</label>
    </ligand>
    <ligandPart>
        <name>Mg</name>
        <dbReference type="ChEBI" id="CHEBI:25107"/>
    </ligandPart>
</feature>
<feature type="binding site" evidence="1">
    <location>
        <position position="254"/>
    </location>
    <ligand>
        <name>chlorophyll a</name>
        <dbReference type="ChEBI" id="CHEBI:58416"/>
        <label>6</label>
    </ligand>
</feature>
<feature type="binding site" evidence="1">
    <location>
        <position position="261"/>
    </location>
    <ligand>
        <name>chlorophyll b</name>
        <dbReference type="ChEBI" id="CHEBI:61721"/>
        <label>5</label>
    </ligand>
</feature>
<feature type="splice variant" id="VSP_058349" description="In isoform 2.">
    <location>
        <begin position="1"/>
        <end position="103"/>
    </location>
</feature>
<feature type="helix" evidence="21">
    <location>
        <begin position="57"/>
        <end position="59"/>
    </location>
</feature>
<feature type="strand" evidence="21">
    <location>
        <begin position="71"/>
        <end position="73"/>
    </location>
</feature>
<feature type="helix" evidence="21">
    <location>
        <begin position="86"/>
        <end position="118"/>
    </location>
</feature>
<feature type="helix" evidence="21">
    <location>
        <begin position="128"/>
        <end position="135"/>
    </location>
</feature>
<feature type="strand" evidence="21">
    <location>
        <begin position="137"/>
        <end position="139"/>
    </location>
</feature>
<feature type="helix" evidence="21">
    <location>
        <begin position="155"/>
        <end position="175"/>
    </location>
</feature>
<feature type="strand" evidence="21">
    <location>
        <begin position="178"/>
        <end position="180"/>
    </location>
</feature>
<feature type="helix" evidence="21">
    <location>
        <begin position="191"/>
        <end position="194"/>
    </location>
</feature>
<feature type="helix" evidence="21">
    <location>
        <begin position="202"/>
        <end position="232"/>
    </location>
</feature>
<feature type="helix" evidence="21">
    <location>
        <begin position="237"/>
        <end position="246"/>
    </location>
</feature>
<evidence type="ECO:0000250" key="1"/>
<evidence type="ECO:0000250" key="2">
    <source>
        <dbReference type="UniProtKB" id="P07371"/>
    </source>
</evidence>
<evidence type="ECO:0000250" key="3">
    <source>
        <dbReference type="UniProtKB" id="P12333"/>
    </source>
</evidence>
<evidence type="ECO:0000255" key="4"/>
<evidence type="ECO:0000269" key="5">
    <source>
    </source>
</evidence>
<evidence type="ECO:0000269" key="6">
    <source>
    </source>
</evidence>
<evidence type="ECO:0000269" key="7">
    <source>
    </source>
</evidence>
<evidence type="ECO:0000269" key="8">
    <source>
    </source>
</evidence>
<evidence type="ECO:0000269" key="9">
    <source>
    </source>
</evidence>
<evidence type="ECO:0000269" key="10">
    <source>
    </source>
</evidence>
<evidence type="ECO:0000269" key="11">
    <source>
    </source>
</evidence>
<evidence type="ECO:0000269" key="12">
    <source>
    </source>
</evidence>
<evidence type="ECO:0000269" key="13">
    <source>
    </source>
</evidence>
<evidence type="ECO:0000269" key="14">
    <source>
    </source>
</evidence>
<evidence type="ECO:0000303" key="15">
    <source>
    </source>
</evidence>
<evidence type="ECO:0000305" key="16"/>
<evidence type="ECO:0000312" key="17">
    <source>
        <dbReference type="Araport" id="AT5G54270"/>
    </source>
</evidence>
<evidence type="ECO:0000312" key="18">
    <source>
        <dbReference type="EMBL" id="AAD37362.1"/>
    </source>
</evidence>
<evidence type="ECO:0000312" key="19">
    <source>
        <dbReference type="EMBL" id="AED96477.1"/>
    </source>
</evidence>
<evidence type="ECO:0000312" key="20">
    <source>
        <dbReference type="EMBL" id="BAB10750.1"/>
    </source>
</evidence>
<evidence type="ECO:0007829" key="21">
    <source>
        <dbReference type="PDB" id="7OUI"/>
    </source>
</evidence>
<comment type="function">
    <text evidence="9 13">The light-harvesting complex (LHC) functions as a light receptor, it captures and delivers excitation energy to photosystems with which it is closely associated (PubMed:26562806). Modulates the rate of photosystem II (PSII) state transitions and influences PSII macrostructure (PubMed:19880802). Involved in PSII excitation energy transfer and charge separation during photosynthesis in thylakoids (PubMed:26562806).</text>
</comment>
<comment type="cofactor">
    <text evidence="3">Binds at least 14 chlorophylls (8 Chl-a and 6 Chl-b) and carotenoids such as lutein and neoxanthin.</text>
</comment>
<comment type="subunit">
    <text evidence="5 6 8 11">Present in M heterotrimers (PubMed:23274453). Forms heterotrimers with LHCB1, LHCB2, and LHCB5 proteins (PubMed:15208324, PubMed:16551629). The LHC complex consists of chlorophyll a-b binding proteins (PubMed:11245797).</text>
</comment>
<comment type="subcellular location">
    <subcellularLocation>
        <location evidence="8">Plastid</location>
        <location evidence="8">Chloroplast thylakoid membrane</location>
        <topology evidence="4">Multi-pass membrane protein</topology>
    </subcellularLocation>
</comment>
<comment type="alternative products">
    <event type="alternative splicing"/>
    <isoform>
        <id>Q9S7M0-1</id>
        <name>1</name>
        <sequence type="displayed"/>
    </isoform>
    <isoform>
        <id>Q9S7M0-2</id>
        <name>2</name>
        <sequence type="described" ref="VSP_058349"/>
    </isoform>
</comment>
<comment type="induction">
    <text evidence="7 11 12 14">Repressed by high-light (HL) in a CAO-dependent manner (at protein level) (PubMed:16170635, PubMed:23598180). Reduced levels relative to CP43 during high light acclimation, thus helping photosystem II (PSII) structural re-arrangement (PubMed:23274453). Repressed by the herbicide bromacil (BRO) (PubMed:26802342).</text>
</comment>
<comment type="disruption phenotype">
    <text evidence="9 10 13">In koLhcb3, accumulation of LHCB1 and LHCB2 apoproteins to adjust photosystem II (PSII) (PubMed:19880802, PubMed:26562806). However, altered macrostructural arrangement of the LHCII antenna and increased rate of PSII transition from state 1 to state 2. Increased phosphorylation level of LHCII (PubMed:19880802). Reduced responsiveness of stomatal movement to abscisic acid (ABA), therefore resulting in a decrease in tolerance to drought stress (PubMed:22143917). Deceleration of the fast phase of excitation dynamics in grana cores (PubMed:26562806).</text>
</comment>
<comment type="similarity">
    <text evidence="16">Belongs to the light-harvesting chlorophyll a/b-binding (LHC) protein family.</text>
</comment>
<dbReference type="EMBL" id="AF143691">
    <property type="protein sequence ID" value="AAD37362.1"/>
    <property type="molecule type" value="mRNA"/>
</dbReference>
<dbReference type="EMBL" id="AF134126">
    <property type="protein sequence ID" value="AAD28773.1"/>
    <property type="molecule type" value="mRNA"/>
</dbReference>
<dbReference type="EMBL" id="AB010695">
    <property type="protein sequence ID" value="BAB10750.1"/>
    <property type="molecule type" value="Genomic_DNA"/>
</dbReference>
<dbReference type="EMBL" id="CP002688">
    <property type="protein sequence ID" value="AED96477.1"/>
    <property type="molecule type" value="Genomic_DNA"/>
</dbReference>
<dbReference type="EMBL" id="AF361858">
    <property type="protein sequence ID" value="AAK32870.1"/>
    <property type="molecule type" value="mRNA"/>
</dbReference>
<dbReference type="EMBL" id="AF372917">
    <property type="protein sequence ID" value="AAK49633.1"/>
    <property type="molecule type" value="mRNA"/>
</dbReference>
<dbReference type="EMBL" id="AY057735">
    <property type="protein sequence ID" value="AAL15365.1"/>
    <property type="molecule type" value="mRNA"/>
</dbReference>
<dbReference type="EMBL" id="AK318653">
    <property type="protein sequence ID" value="BAH56768.1"/>
    <property type="molecule type" value="mRNA"/>
</dbReference>
<dbReference type="EMBL" id="Z18479">
    <property type="protein sequence ID" value="CAA79201.1"/>
    <property type="molecule type" value="mRNA"/>
</dbReference>
<dbReference type="PIR" id="T52318">
    <property type="entry name" value="T52318"/>
</dbReference>
<dbReference type="RefSeq" id="NP_200238.1">
    <molecule id="Q9S7M0-1"/>
    <property type="nucleotide sequence ID" value="NM_124807.4"/>
</dbReference>
<dbReference type="PDB" id="7OUI">
    <property type="method" value="EM"/>
    <property type="resolution" value="2.79 A"/>
    <property type="chains" value="2/6=23-265"/>
</dbReference>
<dbReference type="PDBsum" id="7OUI"/>
<dbReference type="EMDB" id="EMD-13078"/>
<dbReference type="SMR" id="Q9S7M0"/>
<dbReference type="FunCoup" id="Q9S7M0">
    <property type="interactions" value="913"/>
</dbReference>
<dbReference type="STRING" id="3702.Q9S7M0"/>
<dbReference type="TCDB" id="3.E.2.2.3">
    <property type="family name" value="the photosynthetic reaction center (prc) family"/>
</dbReference>
<dbReference type="iPTMnet" id="Q9S7M0"/>
<dbReference type="PaxDb" id="3702-AT5G54270.1"/>
<dbReference type="ProteomicsDB" id="239183">
    <molecule id="Q9S7M0-1"/>
</dbReference>
<dbReference type="EnsemblPlants" id="AT5G54270.1">
    <molecule id="Q9S7M0-1"/>
    <property type="protein sequence ID" value="AT5G54270.1"/>
    <property type="gene ID" value="AT5G54270"/>
</dbReference>
<dbReference type="GeneID" id="835515"/>
<dbReference type="Gramene" id="AT5G54270.1">
    <molecule id="Q9S7M0-1"/>
    <property type="protein sequence ID" value="AT5G54270.1"/>
    <property type="gene ID" value="AT5G54270"/>
</dbReference>
<dbReference type="KEGG" id="ath:AT5G54270"/>
<dbReference type="Araport" id="AT5G54270"/>
<dbReference type="TAIR" id="AT5G54270">
    <property type="gene designation" value="LHCB3"/>
</dbReference>
<dbReference type="eggNOG" id="ENOG502QQ3N">
    <property type="taxonomic scope" value="Eukaryota"/>
</dbReference>
<dbReference type="HOGENOM" id="CLU_057943_2_0_1"/>
<dbReference type="InParanoid" id="Q9S7M0"/>
<dbReference type="OMA" id="WVRVEFK"/>
<dbReference type="OrthoDB" id="423598at2759"/>
<dbReference type="PhylomeDB" id="Q9S7M0"/>
<dbReference type="CD-CODE" id="4299E36E">
    <property type="entry name" value="Nucleolus"/>
</dbReference>
<dbReference type="PRO" id="PR:Q9S7M0"/>
<dbReference type="Proteomes" id="UP000006548">
    <property type="component" value="Chromosome 5"/>
</dbReference>
<dbReference type="ExpressionAtlas" id="Q9S7M0">
    <property type="expression patterns" value="baseline and differential"/>
</dbReference>
<dbReference type="GO" id="GO:0009507">
    <property type="term" value="C:chloroplast"/>
    <property type="evidence" value="ECO:0007005"/>
    <property type="project" value="TAIR"/>
</dbReference>
<dbReference type="GO" id="GO:0009534">
    <property type="term" value="C:chloroplast thylakoid"/>
    <property type="evidence" value="ECO:0007005"/>
    <property type="project" value="TAIR"/>
</dbReference>
<dbReference type="GO" id="GO:0009535">
    <property type="term" value="C:chloroplast thylakoid membrane"/>
    <property type="evidence" value="ECO:0007005"/>
    <property type="project" value="TAIR"/>
</dbReference>
<dbReference type="GO" id="GO:0009522">
    <property type="term" value="C:photosystem I"/>
    <property type="evidence" value="ECO:0007669"/>
    <property type="project" value="UniProtKB-KW"/>
</dbReference>
<dbReference type="GO" id="GO:0009523">
    <property type="term" value="C:photosystem II"/>
    <property type="evidence" value="ECO:0007669"/>
    <property type="project" value="UniProtKB-KW"/>
</dbReference>
<dbReference type="GO" id="GO:0009536">
    <property type="term" value="C:plastid"/>
    <property type="evidence" value="ECO:0007005"/>
    <property type="project" value="TAIR"/>
</dbReference>
<dbReference type="GO" id="GO:0009517">
    <property type="term" value="C:PSII associated light-harvesting complex II"/>
    <property type="evidence" value="ECO:0000314"/>
    <property type="project" value="TAIR"/>
</dbReference>
<dbReference type="GO" id="GO:0009579">
    <property type="term" value="C:thylakoid"/>
    <property type="evidence" value="ECO:0007005"/>
    <property type="project" value="TAIR"/>
</dbReference>
<dbReference type="GO" id="GO:0042651">
    <property type="term" value="C:thylakoid membrane"/>
    <property type="evidence" value="ECO:0000314"/>
    <property type="project" value="UniProtKB"/>
</dbReference>
<dbReference type="GO" id="GO:0016168">
    <property type="term" value="F:chlorophyll binding"/>
    <property type="evidence" value="ECO:0007669"/>
    <property type="project" value="UniProtKB-KW"/>
</dbReference>
<dbReference type="GO" id="GO:0046872">
    <property type="term" value="F:metal ion binding"/>
    <property type="evidence" value="ECO:0007669"/>
    <property type="project" value="UniProtKB-KW"/>
</dbReference>
<dbReference type="GO" id="GO:0019904">
    <property type="term" value="F:protein domain specific binding"/>
    <property type="evidence" value="ECO:0000353"/>
    <property type="project" value="CAFA"/>
</dbReference>
<dbReference type="GO" id="GO:0015979">
    <property type="term" value="P:photosynthesis"/>
    <property type="evidence" value="ECO:0000315"/>
    <property type="project" value="TAIR"/>
</dbReference>
<dbReference type="GO" id="GO:0009769">
    <property type="term" value="P:photosynthesis, light harvesting in photosystem II"/>
    <property type="evidence" value="ECO:0000315"/>
    <property type="project" value="UniProtKB"/>
</dbReference>
<dbReference type="GO" id="GO:0010119">
    <property type="term" value="P:regulation of stomatal movement"/>
    <property type="evidence" value="ECO:0000315"/>
    <property type="project" value="UniProtKB"/>
</dbReference>
<dbReference type="GO" id="GO:0009737">
    <property type="term" value="P:response to abscisic acid"/>
    <property type="evidence" value="ECO:0000315"/>
    <property type="project" value="UniProtKB"/>
</dbReference>
<dbReference type="GO" id="GO:0009635">
    <property type="term" value="P:response to herbicide"/>
    <property type="evidence" value="ECO:0000270"/>
    <property type="project" value="UniProtKB"/>
</dbReference>
<dbReference type="GO" id="GO:0009644">
    <property type="term" value="P:response to high light intensity"/>
    <property type="evidence" value="ECO:0000270"/>
    <property type="project" value="UniProtKB"/>
</dbReference>
<dbReference type="FunFam" id="1.10.3460.10:FF:000001">
    <property type="entry name" value="Chlorophyll a-b binding protein, chloroplastic"/>
    <property type="match status" value="1"/>
</dbReference>
<dbReference type="Gene3D" id="1.10.3460.10">
    <property type="entry name" value="Chlorophyll a/b binding protein domain"/>
    <property type="match status" value="1"/>
</dbReference>
<dbReference type="InterPro" id="IPR001344">
    <property type="entry name" value="Chloro_AB-bd_pln"/>
</dbReference>
<dbReference type="InterPro" id="IPR022796">
    <property type="entry name" value="Chloroa_b-bind"/>
</dbReference>
<dbReference type="PANTHER" id="PTHR21649">
    <property type="entry name" value="CHLOROPHYLL A/B BINDING PROTEIN"/>
    <property type="match status" value="1"/>
</dbReference>
<dbReference type="Pfam" id="PF00504">
    <property type="entry name" value="Chloroa_b-bind"/>
    <property type="match status" value="1"/>
</dbReference>
<dbReference type="SUPFAM" id="SSF103511">
    <property type="entry name" value="Chlorophyll a-b binding protein"/>
    <property type="match status" value="1"/>
</dbReference>
<sequence length="265" mass="28707">MASTFTSSSSVLTPTTFLGQTKASSFNPLRDVVSLGSPKYTMGNDLWYGPDRVKYLGPFSVQTPSYLTGEFPGDYGWDTAGLSADPEAFAKNRALEVIHGRWAMLGAFGCITPEVLQKWVRVDFKEPVWFKAGSQIFSEGGLDYLGNPNLVHAQSILAVLGFQVILMGLVEGFRINGLDGVGEGNDLYPGGQYFDPLGLADDPVTFAELKVKEIKNGRLAMFSMFGFFVQAIVTGKGPLENLLDHLDNPVANNAWAFATKFAPGA</sequence>
<reference key="1">
    <citation type="submission" date="1999-04" db="EMBL/GenBank/DDBJ databases">
        <title>Isolation of an Arabidopsis type III chlorophyll a/b binding protein gene (Lhcb3*1).</title>
        <authorList>
            <person name="Benedetti C.E."/>
            <person name="Arruda P."/>
        </authorList>
    </citation>
    <scope>NUCLEOTIDE SEQUENCE [MRNA] (ISOFORM 1)</scope>
</reference>
<reference key="2">
    <citation type="journal article" date="1999" name="Trends Plant Sci.">
        <title>A guide to the Lhc genes and their relatives in Arabidopsis.</title>
        <authorList>
            <person name="Jansson S."/>
        </authorList>
    </citation>
    <scope>NUCLEOTIDE SEQUENCE [MRNA] (ISOFORM 1)</scope>
</reference>
<reference key="3">
    <citation type="journal article" date="1998" name="DNA Res.">
        <title>Structural analysis of Arabidopsis thaliana chromosome 5. V. Sequence features of the regions of 1,381,565 bp covered by twenty one physically assigned P1 and TAC clones.</title>
        <authorList>
            <person name="Kaneko T."/>
            <person name="Kotani H."/>
            <person name="Nakamura Y."/>
            <person name="Sato S."/>
            <person name="Asamizu E."/>
            <person name="Miyajima N."/>
            <person name="Tabata S."/>
        </authorList>
    </citation>
    <scope>NUCLEOTIDE SEQUENCE [LARGE SCALE GENOMIC DNA]</scope>
    <source>
        <strain>cv. Columbia</strain>
    </source>
</reference>
<reference key="4">
    <citation type="journal article" date="2017" name="Plant J.">
        <title>Araport11: a complete reannotation of the Arabidopsis thaliana reference genome.</title>
        <authorList>
            <person name="Cheng C.Y."/>
            <person name="Krishnakumar V."/>
            <person name="Chan A.P."/>
            <person name="Thibaud-Nissen F."/>
            <person name="Schobel S."/>
            <person name="Town C.D."/>
        </authorList>
    </citation>
    <scope>GENOME REANNOTATION</scope>
    <source>
        <strain>cv. Columbia</strain>
    </source>
</reference>
<reference key="5">
    <citation type="journal article" date="2003" name="Science">
        <title>Empirical analysis of transcriptional activity in the Arabidopsis genome.</title>
        <authorList>
            <person name="Yamada K."/>
            <person name="Lim J."/>
            <person name="Dale J.M."/>
            <person name="Chen H."/>
            <person name="Shinn P."/>
            <person name="Palm C.J."/>
            <person name="Southwick A.M."/>
            <person name="Wu H.C."/>
            <person name="Kim C.J."/>
            <person name="Nguyen M."/>
            <person name="Pham P.K."/>
            <person name="Cheuk R.F."/>
            <person name="Karlin-Newmann G."/>
            <person name="Liu S.X."/>
            <person name="Lam B."/>
            <person name="Sakano H."/>
            <person name="Wu T."/>
            <person name="Yu G."/>
            <person name="Miranda M."/>
            <person name="Quach H.L."/>
            <person name="Tripp M."/>
            <person name="Chang C.H."/>
            <person name="Lee J.M."/>
            <person name="Toriumi M.J."/>
            <person name="Chan M.M."/>
            <person name="Tang C.C."/>
            <person name="Onodera C.S."/>
            <person name="Deng J.M."/>
            <person name="Akiyama K."/>
            <person name="Ansari Y."/>
            <person name="Arakawa T."/>
            <person name="Banh J."/>
            <person name="Banno F."/>
            <person name="Bowser L."/>
            <person name="Brooks S.Y."/>
            <person name="Carninci P."/>
            <person name="Chao Q."/>
            <person name="Choy N."/>
            <person name="Enju A."/>
            <person name="Goldsmith A.D."/>
            <person name="Gurjal M."/>
            <person name="Hansen N.F."/>
            <person name="Hayashizaki Y."/>
            <person name="Johnson-Hopson C."/>
            <person name="Hsuan V.W."/>
            <person name="Iida K."/>
            <person name="Karnes M."/>
            <person name="Khan S."/>
            <person name="Koesema E."/>
            <person name="Ishida J."/>
            <person name="Jiang P.X."/>
            <person name="Jones T."/>
            <person name="Kawai J."/>
            <person name="Kamiya A."/>
            <person name="Meyers C."/>
            <person name="Nakajima M."/>
            <person name="Narusaka M."/>
            <person name="Seki M."/>
            <person name="Sakurai T."/>
            <person name="Satou M."/>
            <person name="Tamse R."/>
            <person name="Vaysberg M."/>
            <person name="Wallender E.K."/>
            <person name="Wong C."/>
            <person name="Yamamura Y."/>
            <person name="Yuan S."/>
            <person name="Shinozaki K."/>
            <person name="Davis R.W."/>
            <person name="Theologis A."/>
            <person name="Ecker J.R."/>
        </authorList>
    </citation>
    <scope>NUCLEOTIDE SEQUENCE [LARGE SCALE MRNA] (ISOFORM 1)</scope>
    <source>
        <strain>cv. Columbia</strain>
    </source>
</reference>
<reference key="6">
    <citation type="journal article" date="2009" name="DNA Res.">
        <title>Analysis of multiple occurrences of alternative splicing events in Arabidopsis thaliana using novel sequenced full-length cDNAs.</title>
        <authorList>
            <person name="Iida K."/>
            <person name="Fukami-Kobayashi K."/>
            <person name="Toyoda A."/>
            <person name="Sakaki Y."/>
            <person name="Kobayashi M."/>
            <person name="Seki M."/>
            <person name="Shinozaki K."/>
        </authorList>
    </citation>
    <scope>NUCLEOTIDE SEQUENCE [LARGE SCALE MRNA] (ISOFORM 2)</scope>
    <source>
        <strain>cv. Columbia</strain>
    </source>
</reference>
<reference key="7">
    <citation type="submission" date="1992-11" db="EMBL/GenBank/DDBJ databases">
        <title>The Arabidopsis thaliana transcribed genome: the GDR cDNA program.</title>
        <authorList>
            <person name="Berthomieu P."/>
            <person name="Guerrier D."/>
            <person name="Giraudat J."/>
        </authorList>
    </citation>
    <scope>NUCLEOTIDE SEQUENCE [MRNA] OF 1-104 (ISOFORM 1)</scope>
    <source>
        <strain>cv. Columbia</strain>
        <tissue>Protoplast</tissue>
    </source>
</reference>
<reference key="8">
    <citation type="journal article" date="2001" name="Biochim. Biophys. Acta">
        <title>Identification of Lhcb1/Lhcb2/Lhcb3 heterotrimers of the main light-harvesting chlorophyll a/b-protein complex of Photosystem II (LHC II).</title>
        <authorList>
            <person name="Jackowski G."/>
            <person name="Kacprzak K."/>
            <person name="Jansson S."/>
        </authorList>
    </citation>
    <scope>SUBUNIT</scope>
    <source>
        <strain>cv. Columbia</strain>
    </source>
</reference>
<reference key="9">
    <citation type="journal article" date="2004" name="J. Biol. Chem.">
        <title>The three isoforms of the light-harvesting complex II: spectroscopic features, trimer formation, and functional roles.</title>
        <authorList>
            <person name="Standfuss J."/>
            <person name="Kuehlbrandt W."/>
        </authorList>
    </citation>
    <scope>INTERACTION WITH LHCB1 AND LHCB2</scope>
</reference>
<reference key="10">
    <citation type="journal article" date="2005" name="Photosyn. Res.">
        <title>Effects of chlorophyllide a oxygenase overexpression on light acclimation in Arabidopsis thaliana.</title>
        <authorList>
            <person name="Tanaka R."/>
            <person name="Tanaka A."/>
        </authorList>
    </citation>
    <scope>INDUCTION BY LIGHT</scope>
    <source>
        <strain>cv. Columbia</strain>
    </source>
</reference>
<reference key="11">
    <citation type="journal article" date="2006" name="J. Biol. Chem.">
        <title>Plasticity in the composition of the light harvesting antenna of higher plants preserves structural integrity and biological function.</title>
        <authorList>
            <person name="Ruban A.V."/>
            <person name="Solovieva S."/>
            <person name="Lee P.J."/>
            <person name="Ilioaia C."/>
            <person name="Wentworth M."/>
            <person name="Ganeteg U."/>
            <person name="Klimmek F."/>
            <person name="Chow W.S."/>
            <person name="Anderson J.M."/>
            <person name="Jansson S."/>
            <person name="Horton P."/>
        </authorList>
    </citation>
    <scope>SUBUNIT</scope>
    <scope>INTERACTION WITH LHCB5</scope>
    <scope>SUBCELLULAR LOCATION</scope>
</reference>
<reference key="12">
    <citation type="journal article" date="2009" name="Plant Cell">
        <title>The photosystem II light-harvesting protein Lhcb3 affects the macrostructure of photosystem II and the rate of state transitions in Arabidopsis.</title>
        <authorList>
            <person name="Damkjaer J.T."/>
            <person name="Kereiche S."/>
            <person name="Johnson M.P."/>
            <person name="Kovacs L."/>
            <person name="Kiss A.Z."/>
            <person name="Boekema E.J."/>
            <person name="Ruban A.V."/>
            <person name="Horton P."/>
            <person name="Jansson S."/>
        </authorList>
    </citation>
    <scope>FUNCTION</scope>
    <scope>DISRUPTION PHENOTYPE</scope>
</reference>
<reference key="13">
    <citation type="journal article" date="2012" name="J. Exp. Bot.">
        <title>Light-harvesting chlorophyll a/b-binding proteins are required for stomatal response to abscisic acid in Arabidopsis.</title>
        <authorList>
            <person name="Xu Y.-H."/>
            <person name="Liu R."/>
            <person name="Yan L."/>
            <person name="Liu Z.-Q."/>
            <person name="Jiang S.-C."/>
            <person name="Shen Y.-Y."/>
            <person name="Wang X.-F."/>
            <person name="Zhang D.-P."/>
        </authorList>
    </citation>
    <scope>FUNCTION</scope>
    <scope>DISRUPTION PHENOTYPE</scope>
    <source>
        <strain>cv. Columbia</strain>
    </source>
</reference>
<reference key="14">
    <citation type="journal article" date="2013" name="Biochim. Biophys. Acta">
        <title>High-light vs. low-light: effect of light acclimation on photosystem II composition and organization in Arabidopsis thaliana.</title>
        <authorList>
            <person name="Kouril R."/>
            <person name="Wientjes E."/>
            <person name="Bultema J.B."/>
            <person name="Croce R."/>
            <person name="Boekema E.J."/>
        </authorList>
    </citation>
    <scope>INDUCTION BY HIGH LIGHT</scope>
    <scope>SUBUNIT</scope>
</reference>
<reference key="15">
    <citation type="journal article" date="2013" name="J. Plant Physiol.">
        <title>AtFtsH heterocomplex-mediated degradation of apoproteins of the major light harvesting complex of photosystem II (LHCII) in response to stresses.</title>
        <authorList>
            <person name="Lucinski R."/>
            <person name="Jackowski G."/>
        </authorList>
    </citation>
    <scope>INDUCTION BY HIGH LIGHT</scope>
</reference>
<reference key="16">
    <citation type="journal article" date="2015" name="J. Photochem. Photobiol. B">
        <title>Excitation energy transfer and charge separation are affected in Arabidopsis thaliana mutants lacking light-harvesting chlorophyll a/b binding protein Lhcb3.</title>
        <authorList>
            <person name="Adamiec M."/>
            <person name="Gibasiewicz K."/>
            <person name="Lucinski R."/>
            <person name="Giera W."/>
            <person name="Chelminiak P."/>
            <person name="Szewczyk S."/>
            <person name="Sipinska W."/>
            <person name="van Grondelle R."/>
            <person name="Jackowski G."/>
        </authorList>
    </citation>
    <scope>FUNCTION</scope>
    <scope>DISRUPTION PHENOTYPE</scope>
    <source>
        <strain>cv. Columbia</strain>
    </source>
</reference>
<reference key="17">
    <citation type="journal article" date="2016" name="Sci. Total Environ.">
        <title>Phytotoxicity of chiral herbicide bromacil: Enantioselectivity of photosynthesis in Arabidopsis thaliana.</title>
        <authorList>
            <person name="Chen Z."/>
            <person name="Zou Y."/>
            <person name="Wang J."/>
            <person name="Li M."/>
            <person name="Wen Y."/>
        </authorList>
    </citation>
    <scope>REGULATION BY BROMACIL</scope>
</reference>